<name>H1X_CAEEL</name>
<evidence type="ECO:0000255" key="1">
    <source>
        <dbReference type="PROSITE-ProRule" id="PRU00837"/>
    </source>
</evidence>
<evidence type="ECO:0000256" key="2">
    <source>
        <dbReference type="SAM" id="MobiDB-lite"/>
    </source>
</evidence>
<protein>
    <recommendedName>
        <fullName>Histone H1.X</fullName>
    </recommendedName>
    <alternativeName>
        <fullName>Histone H1-like protein 1</fullName>
    </alternativeName>
</protein>
<gene>
    <name type="primary">hil-1</name>
    <name type="ORF">C30G7.1</name>
</gene>
<keyword id="KW-0158">Chromosome</keyword>
<keyword id="KW-0238">DNA-binding</keyword>
<keyword id="KW-0539">Nucleus</keyword>
<keyword id="KW-1185">Reference proteome</keyword>
<comment type="subcellular location">
    <subcellularLocation>
        <location evidence="1">Nucleus</location>
    </subcellularLocation>
    <subcellularLocation>
        <location evidence="1">Chromosome</location>
    </subcellularLocation>
</comment>
<comment type="similarity">
    <text evidence="1">Belongs to the histone H1/H5 family.</text>
</comment>
<accession>Q18336</accession>
<accession>O02556</accession>
<feature type="chain" id="PRO_0000195987" description="Histone H1.X">
    <location>
        <begin position="1"/>
        <end position="232"/>
    </location>
</feature>
<feature type="domain" description="H15" evidence="1">
    <location>
        <begin position="36"/>
        <end position="112"/>
    </location>
</feature>
<feature type="region of interest" description="Disordered" evidence="2">
    <location>
        <begin position="142"/>
        <end position="232"/>
    </location>
</feature>
<feature type="compositionally biased region" description="Basic residues" evidence="2">
    <location>
        <begin position="159"/>
        <end position="197"/>
    </location>
</feature>
<proteinExistence type="evidence at transcript level"/>
<sequence length="232" mass="25362">MTTSLIHMANHLDASTEEISLNYVLLGHPHHERAQHHPSYMDMIKGAIQAIDNGTGSSKAAILKYIAQNYHVGENLPKVNNHLRSVLKKAVDSGDIEQTRGHGATGSFRMGKECEKNLQVGIPVQTKPMLMLKEVRQKLENISKAEKTKPSTSSMSTNKKGKPISTMKKRGVMSKKRSSKNKMAPKAKSHGLKKKGPATKSSGLVHKAAGAKNEAAPTTKMELRTGTRKSYC</sequence>
<organism>
    <name type="scientific">Caenorhabditis elegans</name>
    <dbReference type="NCBI Taxonomy" id="6239"/>
    <lineage>
        <taxon>Eukaryota</taxon>
        <taxon>Metazoa</taxon>
        <taxon>Ecdysozoa</taxon>
        <taxon>Nematoda</taxon>
        <taxon>Chromadorea</taxon>
        <taxon>Rhabditida</taxon>
        <taxon>Rhabditina</taxon>
        <taxon>Rhabditomorpha</taxon>
        <taxon>Rhabditoidea</taxon>
        <taxon>Rhabditidae</taxon>
        <taxon>Peloderinae</taxon>
        <taxon>Caenorhabditis</taxon>
    </lineage>
</organism>
<reference key="1">
    <citation type="journal article" date="2001" name="Development">
        <title>A single histone H1 isoform (H1.1) is essential for chromatin silencing and germline development in Caenorhabditis elegans.</title>
        <authorList>
            <person name="Jedrusik M.A."/>
            <person name="Schulze E."/>
        </authorList>
    </citation>
    <scope>NUCLEOTIDE SEQUENCE [MRNA]</scope>
    <source>
        <strain>Bristol N2</strain>
    </source>
</reference>
<reference key="2">
    <citation type="journal article" date="1998" name="Science">
        <title>Genome sequence of the nematode C. elegans: a platform for investigating biology.</title>
        <authorList>
            <consortium name="The C. elegans sequencing consortium"/>
        </authorList>
    </citation>
    <scope>NUCLEOTIDE SEQUENCE [LARGE SCALE GENOMIC DNA]</scope>
    <source>
        <strain>Bristol N2</strain>
    </source>
</reference>
<dbReference type="EMBL" id="AF002679">
    <property type="protein sequence ID" value="AAB60893.1"/>
    <property type="molecule type" value="mRNA"/>
</dbReference>
<dbReference type="EMBL" id="Z78239">
    <property type="protein sequence ID" value="CAB01632.1"/>
    <property type="molecule type" value="Genomic_DNA"/>
</dbReference>
<dbReference type="PIR" id="T19583">
    <property type="entry name" value="T19583"/>
</dbReference>
<dbReference type="RefSeq" id="NP_506680.1">
    <property type="nucleotide sequence ID" value="NM_074279.7"/>
</dbReference>
<dbReference type="SMR" id="Q18336"/>
<dbReference type="FunCoup" id="Q18336">
    <property type="interactions" value="1"/>
</dbReference>
<dbReference type="STRING" id="6239.C30G7.1.1"/>
<dbReference type="PaxDb" id="6239-C30G7.1"/>
<dbReference type="PeptideAtlas" id="Q18336"/>
<dbReference type="EnsemblMetazoa" id="C30G7.1.1">
    <property type="protein sequence ID" value="C30G7.1.1"/>
    <property type="gene ID" value="WBGene00001852"/>
</dbReference>
<dbReference type="GeneID" id="179993"/>
<dbReference type="KEGG" id="cel:CELE_C30G7.1"/>
<dbReference type="UCSC" id="C30G7.1">
    <property type="organism name" value="c. elegans"/>
</dbReference>
<dbReference type="AGR" id="WB:WBGene00001852"/>
<dbReference type="CTD" id="179993"/>
<dbReference type="WormBase" id="C30G7.1">
    <property type="protein sequence ID" value="CE08476"/>
    <property type="gene ID" value="WBGene00001852"/>
    <property type="gene designation" value="hil-1"/>
</dbReference>
<dbReference type="eggNOG" id="KOG4012">
    <property type="taxonomic scope" value="Eukaryota"/>
</dbReference>
<dbReference type="HOGENOM" id="CLU_052897_1_1_1"/>
<dbReference type="InParanoid" id="Q18336"/>
<dbReference type="OMA" id="MIKGAIQ"/>
<dbReference type="OrthoDB" id="1110759at2759"/>
<dbReference type="PhylomeDB" id="Q18336"/>
<dbReference type="PRO" id="PR:Q18336"/>
<dbReference type="Proteomes" id="UP000001940">
    <property type="component" value="Chromosome V"/>
</dbReference>
<dbReference type="Bgee" id="WBGene00001852">
    <property type="expression patterns" value="Expressed in larva and 3 other cell types or tissues"/>
</dbReference>
<dbReference type="GO" id="GO:0045111">
    <property type="term" value="C:intermediate filament cytoskeleton"/>
    <property type="evidence" value="ECO:0000314"/>
    <property type="project" value="WormBase"/>
</dbReference>
<dbReference type="GO" id="GO:0005730">
    <property type="term" value="C:nucleolus"/>
    <property type="evidence" value="ECO:0000314"/>
    <property type="project" value="WormBase"/>
</dbReference>
<dbReference type="GO" id="GO:0000786">
    <property type="term" value="C:nucleosome"/>
    <property type="evidence" value="ECO:0007669"/>
    <property type="project" value="InterPro"/>
</dbReference>
<dbReference type="GO" id="GO:0005634">
    <property type="term" value="C:nucleus"/>
    <property type="evidence" value="ECO:0000314"/>
    <property type="project" value="WormBase"/>
</dbReference>
<dbReference type="GO" id="GO:0003690">
    <property type="term" value="F:double-stranded DNA binding"/>
    <property type="evidence" value="ECO:0000318"/>
    <property type="project" value="GO_Central"/>
</dbReference>
<dbReference type="GO" id="GO:0031492">
    <property type="term" value="F:nucleosomal DNA binding"/>
    <property type="evidence" value="ECO:0000318"/>
    <property type="project" value="GO_Central"/>
</dbReference>
<dbReference type="GO" id="GO:0030527">
    <property type="term" value="F:structural constituent of chromatin"/>
    <property type="evidence" value="ECO:0007669"/>
    <property type="project" value="InterPro"/>
</dbReference>
<dbReference type="GO" id="GO:0010171">
    <property type="term" value="P:body morphogenesis"/>
    <property type="evidence" value="ECO:0000315"/>
    <property type="project" value="WormBase"/>
</dbReference>
<dbReference type="GO" id="GO:0030261">
    <property type="term" value="P:chromosome condensation"/>
    <property type="evidence" value="ECO:0000318"/>
    <property type="project" value="GO_Central"/>
</dbReference>
<dbReference type="GO" id="GO:0018991">
    <property type="term" value="P:egg-laying behavior"/>
    <property type="evidence" value="ECO:0000315"/>
    <property type="project" value="WormBase"/>
</dbReference>
<dbReference type="GO" id="GO:0040011">
    <property type="term" value="P:locomotion"/>
    <property type="evidence" value="ECO:0000315"/>
    <property type="project" value="WormBase"/>
</dbReference>
<dbReference type="GO" id="GO:0035264">
    <property type="term" value="P:multicellular organism growth"/>
    <property type="evidence" value="ECO:0000315"/>
    <property type="project" value="WormBase"/>
</dbReference>
<dbReference type="GO" id="GO:0045910">
    <property type="term" value="P:negative regulation of DNA recombination"/>
    <property type="evidence" value="ECO:0000318"/>
    <property type="project" value="GO_Central"/>
</dbReference>
<dbReference type="GO" id="GO:0160094">
    <property type="term" value="P:nematode pharynx development"/>
    <property type="evidence" value="ECO:0000315"/>
    <property type="project" value="WormBase"/>
</dbReference>
<dbReference type="GO" id="GO:0006334">
    <property type="term" value="P:nucleosome assembly"/>
    <property type="evidence" value="ECO:0007669"/>
    <property type="project" value="InterPro"/>
</dbReference>
<dbReference type="CDD" id="cd00073">
    <property type="entry name" value="H15"/>
    <property type="match status" value="1"/>
</dbReference>
<dbReference type="FunFam" id="1.10.10.10:FF:000140">
    <property type="entry name" value="Histone H1.0"/>
    <property type="match status" value="1"/>
</dbReference>
<dbReference type="Gene3D" id="1.10.10.10">
    <property type="entry name" value="Winged helix-like DNA-binding domain superfamily/Winged helix DNA-binding domain"/>
    <property type="match status" value="1"/>
</dbReference>
<dbReference type="InterPro" id="IPR005819">
    <property type="entry name" value="H1/H5"/>
</dbReference>
<dbReference type="InterPro" id="IPR005818">
    <property type="entry name" value="Histone_H1/H5_H15"/>
</dbReference>
<dbReference type="InterPro" id="IPR036388">
    <property type="entry name" value="WH-like_DNA-bd_sf"/>
</dbReference>
<dbReference type="InterPro" id="IPR036390">
    <property type="entry name" value="WH_DNA-bd_sf"/>
</dbReference>
<dbReference type="PANTHER" id="PTHR11467">
    <property type="entry name" value="HISTONE H1"/>
    <property type="match status" value="1"/>
</dbReference>
<dbReference type="PANTHER" id="PTHR11467:SF61">
    <property type="entry name" value="HISTONE H1.X"/>
    <property type="match status" value="1"/>
</dbReference>
<dbReference type="Pfam" id="PF00538">
    <property type="entry name" value="Linker_histone"/>
    <property type="match status" value="1"/>
</dbReference>
<dbReference type="PRINTS" id="PR00624">
    <property type="entry name" value="HISTONEH5"/>
</dbReference>
<dbReference type="SMART" id="SM00526">
    <property type="entry name" value="H15"/>
    <property type="match status" value="1"/>
</dbReference>
<dbReference type="SUPFAM" id="SSF46785">
    <property type="entry name" value="Winged helix' DNA-binding domain"/>
    <property type="match status" value="1"/>
</dbReference>
<dbReference type="PROSITE" id="PS51504">
    <property type="entry name" value="H15"/>
    <property type="match status" value="1"/>
</dbReference>